<protein>
    <recommendedName>
        <fullName evidence="8">Myosin, light chain 1, alkali; skeletal, fast</fullName>
    </recommendedName>
</protein>
<reference key="1">
    <citation type="journal article" date="2013" name="Nature">
        <title>The zebrafish reference genome sequence and its relationship to the human genome.</title>
        <authorList>
            <person name="Howe K."/>
            <person name="Clark M.D."/>
            <person name="Torroja C.F."/>
            <person name="Torrance J."/>
            <person name="Berthelot C."/>
            <person name="Muffato M."/>
            <person name="Collins J.E."/>
            <person name="Humphray S."/>
            <person name="McLaren K."/>
            <person name="Matthews L."/>
            <person name="McLaren S."/>
            <person name="Sealy I."/>
            <person name="Caccamo M."/>
            <person name="Churcher C."/>
            <person name="Scott C."/>
            <person name="Barrett J.C."/>
            <person name="Koch R."/>
            <person name="Rauch G.J."/>
            <person name="White S."/>
            <person name="Chow W."/>
            <person name="Kilian B."/>
            <person name="Quintais L.T."/>
            <person name="Guerra-Assuncao J.A."/>
            <person name="Zhou Y."/>
            <person name="Gu Y."/>
            <person name="Yen J."/>
            <person name="Vogel J.H."/>
            <person name="Eyre T."/>
            <person name="Redmond S."/>
            <person name="Banerjee R."/>
            <person name="Chi J."/>
            <person name="Fu B."/>
            <person name="Langley E."/>
            <person name="Maguire S.F."/>
            <person name="Laird G.K."/>
            <person name="Lloyd D."/>
            <person name="Kenyon E."/>
            <person name="Donaldson S."/>
            <person name="Sehra H."/>
            <person name="Almeida-King J."/>
            <person name="Loveland J."/>
            <person name="Trevanion S."/>
            <person name="Jones M."/>
            <person name="Quail M."/>
            <person name="Willey D."/>
            <person name="Hunt A."/>
            <person name="Burton J."/>
            <person name="Sims S."/>
            <person name="McLay K."/>
            <person name="Plumb B."/>
            <person name="Davis J."/>
            <person name="Clee C."/>
            <person name="Oliver K."/>
            <person name="Clark R."/>
            <person name="Riddle C."/>
            <person name="Elliot D."/>
            <person name="Threadgold G."/>
            <person name="Harden G."/>
            <person name="Ware D."/>
            <person name="Begum S."/>
            <person name="Mortimore B."/>
            <person name="Kerry G."/>
            <person name="Heath P."/>
            <person name="Phillimore B."/>
            <person name="Tracey A."/>
            <person name="Corby N."/>
            <person name="Dunn M."/>
            <person name="Johnson C."/>
            <person name="Wood J."/>
            <person name="Clark S."/>
            <person name="Pelan S."/>
            <person name="Griffiths G."/>
            <person name="Smith M."/>
            <person name="Glithero R."/>
            <person name="Howden P."/>
            <person name="Barker N."/>
            <person name="Lloyd C."/>
            <person name="Stevens C."/>
            <person name="Harley J."/>
            <person name="Holt K."/>
            <person name="Panagiotidis G."/>
            <person name="Lovell J."/>
            <person name="Beasley H."/>
            <person name="Henderson C."/>
            <person name="Gordon D."/>
            <person name="Auger K."/>
            <person name="Wright D."/>
            <person name="Collins J."/>
            <person name="Raisen C."/>
            <person name="Dyer L."/>
            <person name="Leung K."/>
            <person name="Robertson L."/>
            <person name="Ambridge K."/>
            <person name="Leongamornlert D."/>
            <person name="McGuire S."/>
            <person name="Gilderthorp R."/>
            <person name="Griffiths C."/>
            <person name="Manthravadi D."/>
            <person name="Nichol S."/>
            <person name="Barker G."/>
            <person name="Whitehead S."/>
            <person name="Kay M."/>
            <person name="Brown J."/>
            <person name="Murnane C."/>
            <person name="Gray E."/>
            <person name="Humphries M."/>
            <person name="Sycamore N."/>
            <person name="Barker D."/>
            <person name="Saunders D."/>
            <person name="Wallis J."/>
            <person name="Babbage A."/>
            <person name="Hammond S."/>
            <person name="Mashreghi-Mohammadi M."/>
            <person name="Barr L."/>
            <person name="Martin S."/>
            <person name="Wray P."/>
            <person name="Ellington A."/>
            <person name="Matthews N."/>
            <person name="Ellwood M."/>
            <person name="Woodmansey R."/>
            <person name="Clark G."/>
            <person name="Cooper J."/>
            <person name="Tromans A."/>
            <person name="Grafham D."/>
            <person name="Skuce C."/>
            <person name="Pandian R."/>
            <person name="Andrews R."/>
            <person name="Harrison E."/>
            <person name="Kimberley A."/>
            <person name="Garnett J."/>
            <person name="Fosker N."/>
            <person name="Hall R."/>
            <person name="Garner P."/>
            <person name="Kelly D."/>
            <person name="Bird C."/>
            <person name="Palmer S."/>
            <person name="Gehring I."/>
            <person name="Berger A."/>
            <person name="Dooley C.M."/>
            <person name="Ersan-Urun Z."/>
            <person name="Eser C."/>
            <person name="Geiger H."/>
            <person name="Geisler M."/>
            <person name="Karotki L."/>
            <person name="Kirn A."/>
            <person name="Konantz J."/>
            <person name="Konantz M."/>
            <person name="Oberlander M."/>
            <person name="Rudolph-Geiger S."/>
            <person name="Teucke M."/>
            <person name="Lanz C."/>
            <person name="Raddatz G."/>
            <person name="Osoegawa K."/>
            <person name="Zhu B."/>
            <person name="Rapp A."/>
            <person name="Widaa S."/>
            <person name="Langford C."/>
            <person name="Yang F."/>
            <person name="Schuster S.C."/>
            <person name="Carter N.P."/>
            <person name="Harrow J."/>
            <person name="Ning Z."/>
            <person name="Herrero J."/>
            <person name="Searle S.M."/>
            <person name="Enright A."/>
            <person name="Geisler R."/>
            <person name="Plasterk R.H."/>
            <person name="Lee C."/>
            <person name="Westerfield M."/>
            <person name="de Jong P.J."/>
            <person name="Zon L.I."/>
            <person name="Postlethwait J.H."/>
            <person name="Nusslein-Volhard C."/>
            <person name="Hubbard T.J."/>
            <person name="Roest Crollius H."/>
            <person name="Rogers J."/>
            <person name="Stemple D.L."/>
        </authorList>
    </citation>
    <scope>NUCLEOTIDE SEQUENCE [LARGE SCALE GENOMIC DNA]</scope>
    <source>
        <strain>Tuebingen</strain>
    </source>
</reference>
<reference key="2">
    <citation type="submission" date="2004-01" db="EMBL/GenBank/DDBJ databases">
        <authorList>
            <consortium name="NIH - Zebrafish Gene Collection (ZGC) project"/>
        </authorList>
    </citation>
    <scope>NUCLEOTIDE SEQUENCE [LARGE SCALE MRNA]</scope>
    <source>
        <tissue>Embryo</tissue>
    </source>
</reference>
<reference key="3">
    <citation type="journal article" date="2011" name="Dev. Dyn.">
        <title>Alkali-like myosin light chain-1 (myl1) is an early marker for differentiating fast muscle cells in zebrafish.</title>
        <authorList>
            <person name="Burguiere A.C."/>
            <person name="Nord H."/>
            <person name="von Hofsten J."/>
        </authorList>
    </citation>
    <scope>TISSUE SPECIFICITY</scope>
</reference>
<reference key="4">
    <citation type="journal article" date="2018" name="Hum. Mol. Genet.">
        <title>Bi-allelic mutations in MYL1 cause a severe congenital myopathy.</title>
        <authorList>
            <consortium name="UK10K Consortium"/>
            <person name="Ravenscroft G."/>
            <person name="Zaharieva I.T."/>
            <person name="Bortolotti C.A."/>
            <person name="Lambrughi M."/>
            <person name="Pignataro M."/>
            <person name="Borsari M."/>
            <person name="Sewry C.A."/>
            <person name="Phadke R."/>
            <person name="Haliloglu G."/>
            <person name="Ong R."/>
            <person name="Goullee H."/>
            <person name="Whyte T."/>
            <person name="Manzur A."/>
            <person name="Talim B."/>
            <person name="Kaya U."/>
            <person name="Osborn D.P.S."/>
            <person name="Forrest A.R.R."/>
            <person name="Laing N.G."/>
            <person name="Muntoni F."/>
        </authorList>
    </citation>
    <scope>FUNCTION</scope>
    <scope>DISRUPTION PHENOTYPE</scope>
</reference>
<organism>
    <name type="scientific">Danio rerio</name>
    <name type="common">Zebrafish</name>
    <name type="synonym">Brachydanio rerio</name>
    <dbReference type="NCBI Taxonomy" id="7955"/>
    <lineage>
        <taxon>Eukaryota</taxon>
        <taxon>Metazoa</taxon>
        <taxon>Chordata</taxon>
        <taxon>Craniata</taxon>
        <taxon>Vertebrata</taxon>
        <taxon>Euteleostomi</taxon>
        <taxon>Actinopterygii</taxon>
        <taxon>Neopterygii</taxon>
        <taxon>Teleostei</taxon>
        <taxon>Ostariophysi</taxon>
        <taxon>Cypriniformes</taxon>
        <taxon>Danionidae</taxon>
        <taxon>Danioninae</taxon>
        <taxon>Danio</taxon>
    </lineage>
</organism>
<evidence type="ECO:0000250" key="1">
    <source>
        <dbReference type="UniProtKB" id="P02602"/>
    </source>
</evidence>
<evidence type="ECO:0000250" key="2">
    <source>
        <dbReference type="UniProtKB" id="P05976"/>
    </source>
</evidence>
<evidence type="ECO:0000255" key="3">
    <source>
        <dbReference type="PROSITE-ProRule" id="PRU00448"/>
    </source>
</evidence>
<evidence type="ECO:0000256" key="4">
    <source>
        <dbReference type="SAM" id="MobiDB-lite"/>
    </source>
</evidence>
<evidence type="ECO:0000269" key="5">
    <source>
    </source>
</evidence>
<evidence type="ECO:0000269" key="6">
    <source>
    </source>
</evidence>
<evidence type="ECO:0000305" key="7"/>
<evidence type="ECO:0000312" key="8">
    <source>
        <dbReference type="ZFIN" id="ZDB-GENE-030131-8109"/>
    </source>
</evidence>
<gene>
    <name evidence="2" type="primary">myl1</name>
    <name evidence="8" type="synonym">zgc:77231</name>
</gene>
<dbReference type="EMBL" id="CR812481">
    <property type="status" value="NOT_ANNOTATED_CDS"/>
    <property type="molecule type" value="Genomic_DNA"/>
</dbReference>
<dbReference type="EMBL" id="BC059795">
    <property type="protein sequence ID" value="AAH59795.1"/>
    <property type="molecule type" value="mRNA"/>
</dbReference>
<dbReference type="EMBL" id="BC065629">
    <property type="protein sequence ID" value="AAH65629.1"/>
    <property type="molecule type" value="mRNA"/>
</dbReference>
<dbReference type="RefSeq" id="NP_956294.1">
    <property type="nucleotide sequence ID" value="NM_200000.1"/>
</dbReference>
<dbReference type="SMR" id="Q6P0G6"/>
<dbReference type="FunCoup" id="Q6P0G6">
    <property type="interactions" value="688"/>
</dbReference>
<dbReference type="STRING" id="7955.ENSDARP00000004932"/>
<dbReference type="PaxDb" id="7955-ENSDARP00000004932"/>
<dbReference type="Ensembl" id="ENSDART00000014207">
    <property type="protein sequence ID" value="ENSDARP00000004932"/>
    <property type="gene ID" value="ENSDARG00000014196"/>
</dbReference>
<dbReference type="GeneID" id="336165"/>
<dbReference type="KEGG" id="dre:336165"/>
<dbReference type="AGR" id="ZFIN:ZDB-GENE-030131-8109"/>
<dbReference type="CTD" id="4632"/>
<dbReference type="ZFIN" id="ZDB-GENE-030131-8109">
    <property type="gene designation" value="myl1"/>
</dbReference>
<dbReference type="eggNOG" id="KOG0030">
    <property type="taxonomic scope" value="Eukaryota"/>
</dbReference>
<dbReference type="HOGENOM" id="CLU_061288_13_0_1"/>
<dbReference type="InParanoid" id="Q6P0G6"/>
<dbReference type="OMA" id="CKHELID"/>
<dbReference type="OrthoDB" id="5959761at2759"/>
<dbReference type="PhylomeDB" id="Q6P0G6"/>
<dbReference type="TreeFam" id="TF351553"/>
<dbReference type="PRO" id="PR:Q6P0G6"/>
<dbReference type="Proteomes" id="UP000000437">
    <property type="component" value="Chromosome 9"/>
</dbReference>
<dbReference type="Bgee" id="ENSDARG00000014196">
    <property type="expression patterns" value="Expressed in bone element and 32 other cell types or tissues"/>
</dbReference>
<dbReference type="GO" id="GO:0043292">
    <property type="term" value="C:contractile muscle fiber"/>
    <property type="evidence" value="ECO:0000318"/>
    <property type="project" value="GO_Central"/>
</dbReference>
<dbReference type="GO" id="GO:0016460">
    <property type="term" value="C:myosin II complex"/>
    <property type="evidence" value="ECO:0000318"/>
    <property type="project" value="GO_Central"/>
</dbReference>
<dbReference type="GO" id="GO:0005509">
    <property type="term" value="F:calcium ion binding"/>
    <property type="evidence" value="ECO:0007669"/>
    <property type="project" value="InterPro"/>
</dbReference>
<dbReference type="GO" id="GO:0007519">
    <property type="term" value="P:skeletal muscle tissue development"/>
    <property type="evidence" value="ECO:0000315"/>
    <property type="project" value="ZFIN"/>
</dbReference>
<dbReference type="CDD" id="cd00051">
    <property type="entry name" value="EFh"/>
    <property type="match status" value="1"/>
</dbReference>
<dbReference type="FunFam" id="1.10.238.10:FF:000019">
    <property type="entry name" value="Myosin light chain 1 skeletal"/>
    <property type="match status" value="1"/>
</dbReference>
<dbReference type="Gene3D" id="1.10.238.10">
    <property type="entry name" value="EF-hand"/>
    <property type="match status" value="2"/>
</dbReference>
<dbReference type="InterPro" id="IPR050230">
    <property type="entry name" value="CALM/Myosin/TropC-like"/>
</dbReference>
<dbReference type="InterPro" id="IPR011992">
    <property type="entry name" value="EF-hand-dom_pair"/>
</dbReference>
<dbReference type="InterPro" id="IPR002048">
    <property type="entry name" value="EF_hand_dom"/>
</dbReference>
<dbReference type="PANTHER" id="PTHR23048">
    <property type="entry name" value="MYOSIN LIGHT CHAIN 1, 3"/>
    <property type="match status" value="1"/>
</dbReference>
<dbReference type="PANTHER" id="PTHR23048:SF10">
    <property type="entry name" value="MYOSIN, LIGHT CHAIN 1, ALKALI_ SKELETAL, FAST"/>
    <property type="match status" value="1"/>
</dbReference>
<dbReference type="SUPFAM" id="SSF47473">
    <property type="entry name" value="EF-hand"/>
    <property type="match status" value="1"/>
</dbReference>
<dbReference type="PROSITE" id="PS50222">
    <property type="entry name" value="EF_HAND_2"/>
    <property type="match status" value="2"/>
</dbReference>
<keyword id="KW-1185">Reference proteome</keyword>
<keyword id="KW-0677">Repeat</keyword>
<sequence length="190" mass="20932">MAPKKDAKKPEPPKKAEPAPAPAPAPEPPKADAVDLSGVKLDFTQDQMEDYREAFLLFDRVGDSKVAYNQIADIMRALGQNPTNKEVTKILGNPTADDMVNKRVDFEGFLPMLQVVINNPNKATYDDYVEGLRVFDKEGNGTVMGAELRIVLSTLGEKMSEAEIDALMQGQEDENGCVNYEAFVKHIMSV</sequence>
<proteinExistence type="evidence at transcript level"/>
<feature type="initiator methionine" description="Removed" evidence="1">
    <location>
        <position position="1"/>
    </location>
</feature>
<feature type="chain" id="PRO_0000448340" description="Myosin, light chain 1, alkali; skeletal, fast">
    <location>
        <begin position="2"/>
        <end position="190"/>
    </location>
</feature>
<feature type="domain" description="EF-hand 1" evidence="3">
    <location>
        <begin position="46"/>
        <end position="81"/>
    </location>
</feature>
<feature type="domain" description="EF-hand 2" evidence="3">
    <location>
        <begin position="123"/>
        <end position="158"/>
    </location>
</feature>
<feature type="region of interest" description="Disordered" evidence="4">
    <location>
        <begin position="1"/>
        <end position="33"/>
    </location>
</feature>
<feature type="compositionally biased region" description="Basic and acidic residues" evidence="4">
    <location>
        <begin position="1"/>
        <end position="17"/>
    </location>
</feature>
<feature type="compositionally biased region" description="Pro residues" evidence="4">
    <location>
        <begin position="19"/>
        <end position="28"/>
    </location>
</feature>
<comment type="function">
    <text evidence="6">Non-regulatory myosin light chain required for proper formation and/or maintenance of myofibers, and thus appropriate muscle function.</text>
</comment>
<comment type="subunit">
    <text evidence="7">Myosin is a hexamer of 2 heavy chains and 4 light chains. Does not bind calcium.</text>
</comment>
<comment type="tissue specificity">
    <text evidence="5">Expressed in fast muscle fibers during skeletal muscle differentiation.</text>
</comment>
<comment type="disruption phenotype">
    <text evidence="6">Morphant embryos have curved bodies, bent tails and a marked reduction in touch-evoked escape response. Muscle structure is altered and myofibers are sparse and disordered.</text>
</comment>
<name>MYL1_DANRE</name>
<accession>Q6P0G6</accession>